<proteinExistence type="evidence at protein level"/>
<reference key="1">
    <citation type="journal article" date="1978" name="FEBS Lett.">
        <title>Amino acid sequence of neurotoxin V from the scorpion Leiurus quinquestriatus quinquestriatus.</title>
        <authorList>
            <person name="Kopeyan C."/>
            <person name="Martinez G."/>
            <person name="Rochat H."/>
        </authorList>
    </citation>
    <scope>PROTEIN SEQUENCE</scope>
    <scope>AMIDATION AT ASN-64</scope>
    <scope>SUBCELLULAR LOCATION</scope>
    <source>
        <tissue>Venom</tissue>
    </source>
</reference>
<reference key="2">
    <citation type="journal article" date="1993" name="Toxicon">
        <title>Purification of protein toxins from Leiurus quinquestriatus hebraeus that modify Na channels.</title>
        <authorList>
            <person name="Borneman J."/>
            <person name="Hahin R."/>
        </authorList>
    </citation>
    <scope>FUNCTION</scope>
</reference>
<reference key="3">
    <citation type="journal article" date="1996" name="J. Biol. Chem.">
        <title>Scorpion toxins affecting sodium current inactivation bind to distinct homologous receptor sites on rat brain and insect sodium channels.</title>
        <authorList>
            <person name="Gordon D."/>
            <person name="Martin-Eauclaire M.-F."/>
            <person name="Cestele S."/>
            <person name="Kopeyan C."/>
            <person name="Carlier E."/>
            <person name="Khalifa R.B."/>
            <person name="Pelhate M."/>
            <person name="Rochat H."/>
        </authorList>
    </citation>
    <scope>FUNCTION</scope>
    <scope>TOXIC DOSE</scope>
</reference>
<reference key="4">
    <citation type="journal article" date="2005" name="J. Biol. Chem.">
        <title>Differential phospholipid binding by site 3 and site 4 toxins. Implications for structural variability between voltage-sensitive sodium channel domains.</title>
        <authorList>
            <person name="Smith J.J."/>
            <person name="Alphy S."/>
            <person name="Seibert A.L."/>
            <person name="Blumenthal K.M."/>
        </authorList>
    </citation>
    <scope>PHOSPHOLIPID-BINDING ACTIVITY</scope>
</reference>
<name>SCX5_LEIQU</name>
<feature type="chain" id="PRO_0000066782" description="Alpha-mammal toxin Lqq5" evidence="2">
    <location>
        <begin position="1"/>
        <end position="64"/>
    </location>
</feature>
<feature type="domain" description="LCN-type CS-alpha/beta" evidence="1">
    <location>
        <begin position="2"/>
        <end position="64"/>
    </location>
</feature>
<feature type="modified residue" description="Asparagine amide" evidence="2">
    <location>
        <position position="64"/>
    </location>
</feature>
<feature type="disulfide bond" evidence="1">
    <location>
        <begin position="12"/>
        <end position="63"/>
    </location>
</feature>
<feature type="disulfide bond" evidence="1">
    <location>
        <begin position="16"/>
        <end position="36"/>
    </location>
</feature>
<feature type="disulfide bond" evidence="1">
    <location>
        <begin position="22"/>
        <end position="46"/>
    </location>
</feature>
<feature type="disulfide bond" evidence="1">
    <location>
        <begin position="26"/>
        <end position="48"/>
    </location>
</feature>
<evidence type="ECO:0000255" key="1">
    <source>
        <dbReference type="PROSITE-ProRule" id="PRU01210"/>
    </source>
</evidence>
<evidence type="ECO:0000269" key="2">
    <source>
    </source>
</evidence>
<evidence type="ECO:0000269" key="3">
    <source>
    </source>
</evidence>
<evidence type="ECO:0000269" key="4">
    <source>
    </source>
</evidence>
<evidence type="ECO:0000303" key="5">
    <source>
    </source>
</evidence>
<evidence type="ECO:0000303" key="6">
    <source>
    </source>
</evidence>
<evidence type="ECO:0000303" key="7">
    <source>
    </source>
</evidence>
<evidence type="ECO:0000303" key="8">
    <source>
    </source>
</evidence>
<evidence type="ECO:0000305" key="9"/>
<evidence type="ECO:0000305" key="10">
    <source>
    </source>
</evidence>
<dbReference type="PIR" id="A01741">
    <property type="entry name" value="NTSR5L"/>
</dbReference>
<dbReference type="SMR" id="P01481"/>
<dbReference type="GO" id="GO:0005576">
    <property type="term" value="C:extracellular region"/>
    <property type="evidence" value="ECO:0007669"/>
    <property type="project" value="UniProtKB-SubCell"/>
</dbReference>
<dbReference type="GO" id="GO:0019871">
    <property type="term" value="F:sodium channel inhibitor activity"/>
    <property type="evidence" value="ECO:0007669"/>
    <property type="project" value="InterPro"/>
</dbReference>
<dbReference type="GO" id="GO:0090729">
    <property type="term" value="F:toxin activity"/>
    <property type="evidence" value="ECO:0007669"/>
    <property type="project" value="UniProtKB-KW"/>
</dbReference>
<dbReference type="GO" id="GO:0006952">
    <property type="term" value="P:defense response"/>
    <property type="evidence" value="ECO:0007669"/>
    <property type="project" value="InterPro"/>
</dbReference>
<dbReference type="CDD" id="cd23106">
    <property type="entry name" value="neurotoxins_LC_scorpion"/>
    <property type="match status" value="1"/>
</dbReference>
<dbReference type="FunFam" id="3.30.30.10:FF:000002">
    <property type="entry name" value="Alpha-like toxin BmK-M1"/>
    <property type="match status" value="1"/>
</dbReference>
<dbReference type="Gene3D" id="3.30.30.10">
    <property type="entry name" value="Knottin, scorpion toxin-like"/>
    <property type="match status" value="1"/>
</dbReference>
<dbReference type="InterPro" id="IPR044062">
    <property type="entry name" value="LCN-type_CS_alpha_beta_dom"/>
</dbReference>
<dbReference type="InterPro" id="IPR003614">
    <property type="entry name" value="Scorpion_toxin-like"/>
</dbReference>
<dbReference type="InterPro" id="IPR036574">
    <property type="entry name" value="Scorpion_toxin-like_sf"/>
</dbReference>
<dbReference type="InterPro" id="IPR018218">
    <property type="entry name" value="Scorpion_toxinL"/>
</dbReference>
<dbReference type="InterPro" id="IPR002061">
    <property type="entry name" value="Scorpion_toxinL/defensin"/>
</dbReference>
<dbReference type="Pfam" id="PF00537">
    <property type="entry name" value="Toxin_3"/>
    <property type="match status" value="1"/>
</dbReference>
<dbReference type="PRINTS" id="PR00285">
    <property type="entry name" value="SCORPNTOXIN"/>
</dbReference>
<dbReference type="PRINTS" id="PR00284">
    <property type="entry name" value="TOXIN"/>
</dbReference>
<dbReference type="SMART" id="SM00505">
    <property type="entry name" value="Knot1"/>
    <property type="match status" value="1"/>
</dbReference>
<dbReference type="SUPFAM" id="SSF57095">
    <property type="entry name" value="Scorpion toxin-like"/>
    <property type="match status" value="1"/>
</dbReference>
<dbReference type="PROSITE" id="PS51863">
    <property type="entry name" value="LCN_CSAB"/>
    <property type="match status" value="1"/>
</dbReference>
<keyword id="KW-0027">Amidation</keyword>
<keyword id="KW-0903">Direct protein sequencing</keyword>
<keyword id="KW-1015">Disulfide bond</keyword>
<keyword id="KW-0872">Ion channel impairing toxin</keyword>
<keyword id="KW-0528">Neurotoxin</keyword>
<keyword id="KW-0964">Secreted</keyword>
<keyword id="KW-0800">Toxin</keyword>
<keyword id="KW-0738">Voltage-gated sodium channel impairing toxin</keyword>
<sequence length="64" mass="7301">LKDGYIVDDKNCTFFCGRNAYCNDECKKKGGESGYCQWASPYGNACWCYKLPDRVSIKEKGRCN</sequence>
<comment type="function">
    <text evidence="3 4">Alpha toxins bind voltage-independently at site-3 of sodium channels (Nav) and inhibit the inactivation of the activated channels, thereby blocking neuronal transmission. Is active on mammals and bind with high affinity to rat brain synaptosome. Does not display phospholipid-binding activity.</text>
</comment>
<comment type="subcellular location">
    <subcellularLocation>
        <location evidence="2">Secreted</location>
    </subcellularLocation>
</comment>
<comment type="tissue specificity">
    <text evidence="10">Expressed by the venom gland.</text>
</comment>
<comment type="domain">
    <text evidence="9">Has the structural arrangement of an alpha-helix connected to antiparallel beta-sheets by disulfide bonds (CS-alpha/beta).</text>
</comment>
<comment type="toxic dose">
    <text evidence="4">LD(50) is 125 ng/kg (2.5 ng/mouse) by intracerebroventricular injection into mice, 3.4 pmol/g by subcutaneous injection in mouse and 2317 pmol/g in Blattella germanica.</text>
</comment>
<comment type="similarity">
    <text evidence="9">Belongs to the long (4 C-C) scorpion toxin superfamily. Sodium channel inhibitor family. Alpha subfamily.</text>
</comment>
<accession>P01481</accession>
<organism>
    <name type="scientific">Leiurus quinquestriatus quinquestriatus</name>
    <name type="common">Egyptian scorpion</name>
    <name type="synonym">Deathstalker scorpion</name>
    <dbReference type="NCBI Taxonomy" id="6885"/>
    <lineage>
        <taxon>Eukaryota</taxon>
        <taxon>Metazoa</taxon>
        <taxon>Ecdysozoa</taxon>
        <taxon>Arthropoda</taxon>
        <taxon>Chelicerata</taxon>
        <taxon>Arachnida</taxon>
        <taxon>Scorpiones</taxon>
        <taxon>Buthida</taxon>
        <taxon>Buthoidea</taxon>
        <taxon>Buthidae</taxon>
        <taxon>Leiurus</taxon>
    </lineage>
</organism>
<protein>
    <recommendedName>
        <fullName evidence="7">Alpha-mammal toxin Lqq5</fullName>
    </recommendedName>
    <alternativeName>
        <fullName evidence="8">Lqq V</fullName>
        <shortName evidence="5">LqqV</shortName>
    </alternativeName>
    <alternativeName>
        <fullName evidence="6">Neurotoxin V</fullName>
    </alternativeName>
</protein>